<sequence>GFGSFLGKALKAALKIGANALGGAPQQ</sequence>
<reference evidence="4" key="1">
    <citation type="journal article" date="2016" name="Comp. Biochem. Physiol.">
        <title>Peptidomic analysis of the extensive array of host-defense peptides in skin secretions of the dodecaploid frog Xenopus ruwenzoriensis (Pipidae).</title>
        <authorList>
            <person name="Coquet L."/>
            <person name="Kolodziejek J."/>
            <person name="Jouenne T."/>
            <person name="Nowotny N."/>
            <person name="King J.D."/>
            <person name="Conlon J.M."/>
        </authorList>
    </citation>
    <scope>PROTEIN SEQUENCE</scope>
    <scope>SUBCELLULAR LOCATION</scope>
    <scope>MASS SPECTROMETRY</scope>
    <source>
        <tissue evidence="3">Skin secretion</tissue>
    </source>
</reference>
<accession>C0HKM9</accession>
<proteinExistence type="evidence at protein level"/>
<organism evidence="3">
    <name type="scientific">Xenopus ruwenzoriensis</name>
    <name type="common">Uganda clawed frog</name>
    <dbReference type="NCBI Taxonomy" id="105430"/>
    <lineage>
        <taxon>Eukaryota</taxon>
        <taxon>Metazoa</taxon>
        <taxon>Chordata</taxon>
        <taxon>Craniata</taxon>
        <taxon>Vertebrata</taxon>
        <taxon>Euteleostomi</taxon>
        <taxon>Amphibia</taxon>
        <taxon>Batrachia</taxon>
        <taxon>Anura</taxon>
        <taxon>Pipoidea</taxon>
        <taxon>Pipidae</taxon>
        <taxon>Xenopodinae</taxon>
        <taxon>Xenopus</taxon>
        <taxon>Xenopus</taxon>
    </lineage>
</organism>
<comment type="function">
    <text evidence="1">Antimicrobial peptide.</text>
</comment>
<comment type="subcellular location">
    <subcellularLocation>
        <location evidence="2">Secreted</location>
    </subcellularLocation>
</comment>
<comment type="tissue specificity">
    <text evidence="5">Expressed by the skin glands.</text>
</comment>
<comment type="mass spectrometry"/>
<comment type="similarity">
    <text evidence="4">Belongs to the gastrin/cholecystokinin family.</text>
</comment>
<evidence type="ECO:0000250" key="1">
    <source>
        <dbReference type="UniProtKB" id="C0HK89"/>
    </source>
</evidence>
<evidence type="ECO:0000269" key="2">
    <source>
    </source>
</evidence>
<evidence type="ECO:0000303" key="3">
    <source>
    </source>
</evidence>
<evidence type="ECO:0000305" key="4"/>
<evidence type="ECO:0000305" key="5">
    <source>
    </source>
</evidence>
<feature type="peptide" id="PRO_0000440915" description="Caerulein precursor fragment R5" evidence="2">
    <location>
        <begin position="1"/>
        <end position="27"/>
    </location>
</feature>
<dbReference type="GO" id="GO:0005576">
    <property type="term" value="C:extracellular region"/>
    <property type="evidence" value="ECO:0007669"/>
    <property type="project" value="UniProtKB-SubCell"/>
</dbReference>
<dbReference type="GO" id="GO:0006952">
    <property type="term" value="P:defense response"/>
    <property type="evidence" value="ECO:0007669"/>
    <property type="project" value="UniProtKB-KW"/>
</dbReference>
<keyword id="KW-0878">Amphibian defense peptide</keyword>
<keyword id="KW-0929">Antimicrobial</keyword>
<keyword id="KW-0903">Direct protein sequencing</keyword>
<keyword id="KW-0964">Secreted</keyword>
<protein>
    <recommendedName>
        <fullName evidence="3">Caerulein precursor fragment R5</fullName>
    </recommendedName>
    <alternativeName>
        <fullName evidence="3">CPF-R5</fullName>
    </alternativeName>
</protein>
<name>CPFR5_XENRU</name>